<dbReference type="EMBL" id="CR858088">
    <property type="protein sequence ID" value="CAH90327.1"/>
    <property type="molecule type" value="mRNA"/>
</dbReference>
<dbReference type="RefSeq" id="NP_001125153.1">
    <property type="nucleotide sequence ID" value="NM_001131681.1"/>
</dbReference>
<dbReference type="FunCoup" id="Q5RD30">
    <property type="interactions" value="139"/>
</dbReference>
<dbReference type="STRING" id="9601.ENSPPYP00000001987"/>
<dbReference type="GlyCosmos" id="Q5RD30">
    <property type="glycosylation" value="1 site, No reported glycans"/>
</dbReference>
<dbReference type="GeneID" id="100172040"/>
<dbReference type="KEGG" id="pon:100172040"/>
<dbReference type="CTD" id="57185"/>
<dbReference type="eggNOG" id="KOG2922">
    <property type="taxonomic scope" value="Eukaryota"/>
</dbReference>
<dbReference type="InParanoid" id="Q5RD30"/>
<dbReference type="OrthoDB" id="165382at2759"/>
<dbReference type="Proteomes" id="UP000001595">
    <property type="component" value="Unplaced"/>
</dbReference>
<dbReference type="GO" id="GO:0016020">
    <property type="term" value="C:membrane"/>
    <property type="evidence" value="ECO:0007669"/>
    <property type="project" value="UniProtKB-SubCell"/>
</dbReference>
<dbReference type="GO" id="GO:0015095">
    <property type="term" value="F:magnesium ion transmembrane transporter activity"/>
    <property type="evidence" value="ECO:0007669"/>
    <property type="project" value="InterPro"/>
</dbReference>
<dbReference type="InterPro" id="IPR008521">
    <property type="entry name" value="Mg_trans_NIPA"/>
</dbReference>
<dbReference type="PANTHER" id="PTHR12570">
    <property type="match status" value="1"/>
</dbReference>
<dbReference type="PANTHER" id="PTHR12570:SF14">
    <property type="entry name" value="NIPA-LIKE PROTEIN 3"/>
    <property type="match status" value="1"/>
</dbReference>
<dbReference type="Pfam" id="PF05653">
    <property type="entry name" value="Mg_trans_NIPA"/>
    <property type="match status" value="1"/>
</dbReference>
<organism>
    <name type="scientific">Pongo abelii</name>
    <name type="common">Sumatran orangutan</name>
    <name type="synonym">Pongo pygmaeus abelii</name>
    <dbReference type="NCBI Taxonomy" id="9601"/>
    <lineage>
        <taxon>Eukaryota</taxon>
        <taxon>Metazoa</taxon>
        <taxon>Chordata</taxon>
        <taxon>Craniata</taxon>
        <taxon>Vertebrata</taxon>
        <taxon>Euteleostomi</taxon>
        <taxon>Mammalia</taxon>
        <taxon>Eutheria</taxon>
        <taxon>Euarchontoglires</taxon>
        <taxon>Primates</taxon>
        <taxon>Haplorrhini</taxon>
        <taxon>Catarrhini</taxon>
        <taxon>Hominidae</taxon>
        <taxon>Pongo</taxon>
    </lineage>
</organism>
<name>NPAL3_PONAB</name>
<feature type="chain" id="PRO_0000242152" description="NIPA-like protein 3">
    <location>
        <begin position="1"/>
        <end position="406"/>
    </location>
</feature>
<feature type="transmembrane region" description="Helical" evidence="2">
    <location>
        <begin position="33"/>
        <end position="53"/>
    </location>
</feature>
<feature type="transmembrane region" description="Helical" evidence="2">
    <location>
        <begin position="76"/>
        <end position="96"/>
    </location>
</feature>
<feature type="transmembrane region" description="Helical" evidence="2">
    <location>
        <begin position="101"/>
        <end position="121"/>
    </location>
</feature>
<feature type="transmembrane region" description="Helical" evidence="2">
    <location>
        <begin position="135"/>
        <end position="155"/>
    </location>
</feature>
<feature type="transmembrane region" description="Helical" evidence="2">
    <location>
        <begin position="171"/>
        <end position="191"/>
    </location>
</feature>
<feature type="transmembrane region" description="Helical" evidence="2">
    <location>
        <begin position="202"/>
        <end position="222"/>
    </location>
</feature>
<feature type="transmembrane region" description="Helical" evidence="2">
    <location>
        <begin position="240"/>
        <end position="260"/>
    </location>
</feature>
<feature type="transmembrane region" description="Helical" evidence="2">
    <location>
        <begin position="271"/>
        <end position="291"/>
    </location>
</feature>
<feature type="transmembrane region" description="Helical" evidence="2">
    <location>
        <begin position="300"/>
        <end position="320"/>
    </location>
</feature>
<feature type="modified residue" description="Phosphoserine" evidence="1">
    <location>
        <position position="372"/>
    </location>
</feature>
<feature type="glycosylation site" description="N-linked (GlcNAc...) asparagine" evidence="2">
    <location>
        <position position="166"/>
    </location>
</feature>
<comment type="subcellular location">
    <subcellularLocation>
        <location evidence="3">Membrane</location>
        <topology evidence="3">Multi-pass membrane protein</topology>
    </subcellularLocation>
</comment>
<comment type="similarity">
    <text evidence="3">Belongs to the NIPA family.</text>
</comment>
<sequence>MDGSHSAALQLQQLPPTSSSSAMSEASFSYKENLIGALLAIFGHLVVSIALNLQKYCHIRLAGSKDPRAYFKTKTWWLGLFLMLLGELGVFASYAFAPLSLIVPLSAVSVIASAIIGIIFIKEKWKPKDFLRRYILSFVGCGLAVVGTYLLVTFAPNSREKMTGENVTRHLVSWPFLLYMLVEIILFCLLLYFYKEKNANNIVVILLLVALLGSMTVVTVKAVAGMLVLSIQGNLQLDYPIFYVMFVCMVATAVYQAAFLSQASQMYDSSLIASVGYILSTTIAITAGAIFYLDFIGEDVLHICMFALGCLIAFLGVFLITRNRKKAIPFEPYISMDAMPGMQNMHDKGMTVQPELKASFSYGALENNDNISEIYAPATLPVMQEEHGSRSASGVPYRVLEHTKKE</sequence>
<keyword id="KW-0325">Glycoprotein</keyword>
<keyword id="KW-0472">Membrane</keyword>
<keyword id="KW-0597">Phosphoprotein</keyword>
<keyword id="KW-1185">Reference proteome</keyword>
<keyword id="KW-0812">Transmembrane</keyword>
<keyword id="KW-1133">Transmembrane helix</keyword>
<gene>
    <name type="primary">NIPAL3</name>
    <name type="synonym">NPAL3</name>
</gene>
<evidence type="ECO:0000250" key="1">
    <source>
        <dbReference type="UniProtKB" id="Q6P499"/>
    </source>
</evidence>
<evidence type="ECO:0000255" key="2"/>
<evidence type="ECO:0000305" key="3"/>
<reference key="1">
    <citation type="submission" date="2004-11" db="EMBL/GenBank/DDBJ databases">
        <authorList>
            <consortium name="The German cDNA consortium"/>
        </authorList>
    </citation>
    <scope>NUCLEOTIDE SEQUENCE [LARGE SCALE MRNA]</scope>
    <source>
        <tissue>Kidney</tissue>
    </source>
</reference>
<proteinExistence type="evidence at transcript level"/>
<protein>
    <recommendedName>
        <fullName>NIPA-like protein 3</fullName>
    </recommendedName>
</protein>
<accession>Q5RD30</accession>